<name>NU4C_PROMT</name>
<sequence length="538" mass="58796">MLIPEPILAHFPWLSLSIFFPIVGALIVPFIPDKGEGKEVRWYALIIALITFLITVAAYFKGFDPSQEGLQLYEKVSWLPDLGLTWSVGADGLSMPLILLTSFITSLAVLAAWPVSYKPKLFFFLILAMDGGQIAVFAVQDMLLFFLAWELELFPVYLFLAIWGGKKRQYAATKFIIYTAGSSLFILLAGLAMGFFQGGGMPDFGYTHLAQQNFGKGFQLLCYSGLLIAFGVKLPIVPLHTWLPDAHGEATAPVHMLLAGILLKMGGYALLRFNAQLLPDAHAQFAPLLIVLGVVNIIYAALTSFAQRNLKRKIAYSSISHMGFVLIGIGSFSSLGTSGAMLQMVSHGLIGASLFFLVGATYDRTHTLQLDEMGGIGQNMRIMFALWTACAFASLALPGMSGFISELMVFVGFVTDEVYTLPFRIVVASLAAIGVILTPIYLLSMLREIFFGKENAKLISKAKLVDAEPREIYIIACLLVPIIGIGLYPKIMTDTYISSIDGLVKRDLLAVERIRSDQTTIISNSNLSIGTIEAPLLD</sequence>
<dbReference type="EC" id="7.1.1.-" evidence="1"/>
<dbReference type="EMBL" id="CP000095">
    <property type="protein sequence ID" value="AAZ59004.1"/>
    <property type="molecule type" value="Genomic_DNA"/>
</dbReference>
<dbReference type="RefSeq" id="WP_011294149.1">
    <property type="nucleotide sequence ID" value="NC_007335.2"/>
</dbReference>
<dbReference type="SMR" id="Q46HM4"/>
<dbReference type="STRING" id="59920.PMN2A_1516"/>
<dbReference type="KEGG" id="pmn:PMN2A_1516"/>
<dbReference type="HOGENOM" id="CLU_007100_4_0_3"/>
<dbReference type="OrthoDB" id="9811718at2"/>
<dbReference type="PhylomeDB" id="Q46HM4"/>
<dbReference type="Proteomes" id="UP000002535">
    <property type="component" value="Chromosome"/>
</dbReference>
<dbReference type="GO" id="GO:0031676">
    <property type="term" value="C:plasma membrane-derived thylakoid membrane"/>
    <property type="evidence" value="ECO:0007669"/>
    <property type="project" value="UniProtKB-SubCell"/>
</dbReference>
<dbReference type="GO" id="GO:0008137">
    <property type="term" value="F:NADH dehydrogenase (ubiquinone) activity"/>
    <property type="evidence" value="ECO:0007669"/>
    <property type="project" value="InterPro"/>
</dbReference>
<dbReference type="GO" id="GO:0048039">
    <property type="term" value="F:ubiquinone binding"/>
    <property type="evidence" value="ECO:0007669"/>
    <property type="project" value="TreeGrafter"/>
</dbReference>
<dbReference type="GO" id="GO:0042773">
    <property type="term" value="P:ATP synthesis coupled electron transport"/>
    <property type="evidence" value="ECO:0007669"/>
    <property type="project" value="InterPro"/>
</dbReference>
<dbReference type="GO" id="GO:0015990">
    <property type="term" value="P:electron transport coupled proton transport"/>
    <property type="evidence" value="ECO:0007669"/>
    <property type="project" value="TreeGrafter"/>
</dbReference>
<dbReference type="HAMAP" id="MF_00491">
    <property type="entry name" value="NDH1_NuoM"/>
    <property type="match status" value="1"/>
</dbReference>
<dbReference type="InterPro" id="IPR022997">
    <property type="entry name" value="NADH_Q_OxRdtase_chain4"/>
</dbReference>
<dbReference type="InterPro" id="IPR010227">
    <property type="entry name" value="NADH_Q_OxRdtase_chainM/4"/>
</dbReference>
<dbReference type="InterPro" id="IPR003918">
    <property type="entry name" value="NADH_UbQ_OxRdtase"/>
</dbReference>
<dbReference type="InterPro" id="IPR001750">
    <property type="entry name" value="ND/Mrp_TM"/>
</dbReference>
<dbReference type="NCBIfam" id="TIGR01972">
    <property type="entry name" value="NDH_I_M"/>
    <property type="match status" value="1"/>
</dbReference>
<dbReference type="NCBIfam" id="NF002713">
    <property type="entry name" value="PRK02546.1"/>
    <property type="match status" value="1"/>
</dbReference>
<dbReference type="NCBIfam" id="NF009212">
    <property type="entry name" value="PRK12561.1"/>
    <property type="match status" value="1"/>
</dbReference>
<dbReference type="PANTHER" id="PTHR43507:SF21">
    <property type="entry name" value="NAD(P)H-QUINONE OXIDOREDUCTASE CHAIN 4, CHLOROPLASTIC"/>
    <property type="match status" value="1"/>
</dbReference>
<dbReference type="PANTHER" id="PTHR43507">
    <property type="entry name" value="NADH-UBIQUINONE OXIDOREDUCTASE CHAIN 4"/>
    <property type="match status" value="1"/>
</dbReference>
<dbReference type="Pfam" id="PF00361">
    <property type="entry name" value="Proton_antipo_M"/>
    <property type="match status" value="1"/>
</dbReference>
<dbReference type="PRINTS" id="PR01437">
    <property type="entry name" value="NUOXDRDTASE4"/>
</dbReference>
<accession>Q46HM4</accession>
<organism>
    <name type="scientific">Prochlorococcus marinus (strain NATL2A)</name>
    <dbReference type="NCBI Taxonomy" id="59920"/>
    <lineage>
        <taxon>Bacteria</taxon>
        <taxon>Bacillati</taxon>
        <taxon>Cyanobacteriota</taxon>
        <taxon>Cyanophyceae</taxon>
        <taxon>Synechococcales</taxon>
        <taxon>Prochlorococcaceae</taxon>
        <taxon>Prochlorococcus</taxon>
    </lineage>
</organism>
<comment type="function">
    <text evidence="1">NDH-1 shuttles electrons from NAD(P)H, via FMN and iron-sulfur (Fe-S) centers, to quinones in the respiratory chain. The immediate electron acceptor for the enzyme in this species is believed to be plastoquinone. Couples the redox reaction to proton translocation (for every two electrons transferred, four hydrogen ions are translocated across the cytoplasmic membrane), and thus conserves the redox energy in a proton gradient.</text>
</comment>
<comment type="catalytic activity">
    <reaction evidence="1">
        <text>a plastoquinone + NADH + (n+1) H(+)(in) = a plastoquinol + NAD(+) + n H(+)(out)</text>
        <dbReference type="Rhea" id="RHEA:42608"/>
        <dbReference type="Rhea" id="RHEA-COMP:9561"/>
        <dbReference type="Rhea" id="RHEA-COMP:9562"/>
        <dbReference type="ChEBI" id="CHEBI:15378"/>
        <dbReference type="ChEBI" id="CHEBI:17757"/>
        <dbReference type="ChEBI" id="CHEBI:57540"/>
        <dbReference type="ChEBI" id="CHEBI:57945"/>
        <dbReference type="ChEBI" id="CHEBI:62192"/>
    </reaction>
</comment>
<comment type="catalytic activity">
    <reaction evidence="1">
        <text>a plastoquinone + NADPH + (n+1) H(+)(in) = a plastoquinol + NADP(+) + n H(+)(out)</text>
        <dbReference type="Rhea" id="RHEA:42612"/>
        <dbReference type="Rhea" id="RHEA-COMP:9561"/>
        <dbReference type="Rhea" id="RHEA-COMP:9562"/>
        <dbReference type="ChEBI" id="CHEBI:15378"/>
        <dbReference type="ChEBI" id="CHEBI:17757"/>
        <dbReference type="ChEBI" id="CHEBI:57783"/>
        <dbReference type="ChEBI" id="CHEBI:58349"/>
        <dbReference type="ChEBI" id="CHEBI:62192"/>
    </reaction>
</comment>
<comment type="subcellular location">
    <subcellularLocation>
        <location evidence="1">Cellular thylakoid membrane</location>
        <topology evidence="1">Multi-pass membrane protein</topology>
    </subcellularLocation>
</comment>
<comment type="similarity">
    <text evidence="1">Belongs to the complex I subunit 4 family.</text>
</comment>
<evidence type="ECO:0000255" key="1">
    <source>
        <dbReference type="HAMAP-Rule" id="MF_00491"/>
    </source>
</evidence>
<protein>
    <recommendedName>
        <fullName evidence="1">NAD(P)H-quinone oxidoreductase chain 4</fullName>
        <ecNumber evidence="1">7.1.1.-</ecNumber>
    </recommendedName>
    <alternativeName>
        <fullName evidence="1">NAD(P)H dehydrogenase I, chain 4</fullName>
    </alternativeName>
    <alternativeName>
        <fullName evidence="1">NDH-1, chain 4</fullName>
    </alternativeName>
</protein>
<reference key="1">
    <citation type="journal article" date="2007" name="PLoS Genet.">
        <title>Patterns and implications of gene gain and loss in the evolution of Prochlorococcus.</title>
        <authorList>
            <person name="Kettler G.C."/>
            <person name="Martiny A.C."/>
            <person name="Huang K."/>
            <person name="Zucker J."/>
            <person name="Coleman M.L."/>
            <person name="Rodrigue S."/>
            <person name="Chen F."/>
            <person name="Lapidus A."/>
            <person name="Ferriera S."/>
            <person name="Johnson J."/>
            <person name="Steglich C."/>
            <person name="Church G.M."/>
            <person name="Richardson P."/>
            <person name="Chisholm S.W."/>
        </authorList>
    </citation>
    <scope>NUCLEOTIDE SEQUENCE [LARGE SCALE GENOMIC DNA]</scope>
    <source>
        <strain>NATL2A</strain>
    </source>
</reference>
<proteinExistence type="inferred from homology"/>
<feature type="chain" id="PRO_0000343243" description="NAD(P)H-quinone oxidoreductase chain 4">
    <location>
        <begin position="1"/>
        <end position="538"/>
    </location>
</feature>
<feature type="transmembrane region" description="Helical" evidence="1">
    <location>
        <begin position="11"/>
        <end position="31"/>
    </location>
</feature>
<feature type="transmembrane region" description="Helical" evidence="1">
    <location>
        <begin position="43"/>
        <end position="63"/>
    </location>
</feature>
<feature type="transmembrane region" description="Helical" evidence="1">
    <location>
        <begin position="95"/>
        <end position="115"/>
    </location>
</feature>
<feature type="transmembrane region" description="Helical" evidence="1">
    <location>
        <begin position="119"/>
        <end position="139"/>
    </location>
</feature>
<feature type="transmembrane region" description="Helical" evidence="1">
    <location>
        <begin position="143"/>
        <end position="163"/>
    </location>
</feature>
<feature type="transmembrane region" description="Helical" evidence="1">
    <location>
        <begin position="175"/>
        <end position="195"/>
    </location>
</feature>
<feature type="transmembrane region" description="Helical" evidence="1">
    <location>
        <begin position="217"/>
        <end position="237"/>
    </location>
</feature>
<feature type="transmembrane region" description="Helical" evidence="1">
    <location>
        <begin position="251"/>
        <end position="271"/>
    </location>
</feature>
<feature type="transmembrane region" description="Helical" evidence="1">
    <location>
        <begin position="285"/>
        <end position="305"/>
    </location>
</feature>
<feature type="transmembrane region" description="Helical" evidence="1">
    <location>
        <begin position="314"/>
        <end position="334"/>
    </location>
</feature>
<feature type="transmembrane region" description="Helical" evidence="1">
    <location>
        <begin position="340"/>
        <end position="360"/>
    </location>
</feature>
<feature type="transmembrane region" description="Helical" evidence="1">
    <location>
        <begin position="382"/>
        <end position="404"/>
    </location>
</feature>
<feature type="transmembrane region" description="Helical" evidence="1">
    <location>
        <begin position="425"/>
        <end position="445"/>
    </location>
</feature>
<feature type="transmembrane region" description="Helical" evidence="1">
    <location>
        <begin position="472"/>
        <end position="492"/>
    </location>
</feature>
<gene>
    <name evidence="1" type="primary">ndhD</name>
    <name type="ordered locus">PMN2A_1516</name>
</gene>
<keyword id="KW-0472">Membrane</keyword>
<keyword id="KW-0520">NAD</keyword>
<keyword id="KW-0521">NADP</keyword>
<keyword id="KW-0618">Plastoquinone</keyword>
<keyword id="KW-0874">Quinone</keyword>
<keyword id="KW-1185">Reference proteome</keyword>
<keyword id="KW-0793">Thylakoid</keyword>
<keyword id="KW-1278">Translocase</keyword>
<keyword id="KW-0812">Transmembrane</keyword>
<keyword id="KW-1133">Transmembrane helix</keyword>